<sequence>MEDMAYSVEIDRKWQKIWEETKLYKFNPENVDKKLYCLEMFPYPSGAKLHIGHWYNYGPTDSWARMKRMQGYEVFHPMGFDAFGLPAENYAIKTGIHPYDSTMENIRTMERQLREMGVTFDWDYEIITCLPEYYKWTQWIFLKLYEAGLAYRKKAPVNWCPSCQTVLANEQVIDGKCERCGTEVTKKELTQWFFKITAYAEELLEKLDDLDWPEKTKMMQRNWIGKSEGAEIEFKIDGKDLSFRVFTTRADTLFGATYVVLAPEHELVDLITTEEYKEAVEEYKEYAKKQSEIERLSTEKEKTGVFTGAYAIHPLTGEKLPIWIADYVLVTYGTGCVMGVPGHDERDYEFATKYNLPIKRVIKGVGDVDDSLPFVEYGILVNSEEFTGMTSEEARVKIVEKLKAEGKAEFKVNYRMRDWLVSRQRYWGAPIPIIHCERCGIVPVPEEDLPVLLPYDVEFEPTGESPLKKHAGFMNVTCPKCGGPALRDPDTLDTFVDSSWYYLRYPDNKNDKEPFNKEWINKMLPVDKYVGGAEHATMHLLYSRFITKVLRDLGYLNFDEPFLSLVHQGTILGPDGSRMSKSRGNVISPDDYIKQYGSDVFRLYLMFGFSYSEGGPWSDEGIKAIARFVNRVERFIEKFIETRQNPGKTKEEMEDAEKELNYVRHYTIKHVTLDADKFEFNTAIARIMELVNALYKYENEVEVKNMKFYEDVVRDFVKILAPFAPHFSEEMWERLGYEYSVFNQKWPEWDEKALERDMIEIAIQVNGKVRSKAQVPSNATDEELKQIALSDERVKSYLDGKEIKKVIIVKNRLVNIVVN</sequence>
<feature type="chain" id="PRO_0000152107" description="Leucine--tRNA ligase">
    <location>
        <begin position="1"/>
        <end position="819"/>
    </location>
</feature>
<feature type="short sequence motif" description="'HIGH' region">
    <location>
        <begin position="42"/>
        <end position="53"/>
    </location>
</feature>
<feature type="short sequence motif" description="'KMSKS' region">
    <location>
        <begin position="578"/>
        <end position="582"/>
    </location>
</feature>
<feature type="binding site" evidence="1">
    <location>
        <position position="581"/>
    </location>
    <ligand>
        <name>ATP</name>
        <dbReference type="ChEBI" id="CHEBI:30616"/>
    </ligand>
</feature>
<gene>
    <name evidence="1" type="primary">leuS</name>
    <name type="ordered locus">TTE0324</name>
</gene>
<keyword id="KW-0030">Aminoacyl-tRNA synthetase</keyword>
<keyword id="KW-0067">ATP-binding</keyword>
<keyword id="KW-0963">Cytoplasm</keyword>
<keyword id="KW-0436">Ligase</keyword>
<keyword id="KW-0547">Nucleotide-binding</keyword>
<keyword id="KW-0648">Protein biosynthesis</keyword>
<keyword id="KW-1185">Reference proteome</keyword>
<dbReference type="EC" id="6.1.1.4" evidence="1"/>
<dbReference type="EMBL" id="AE008691">
    <property type="protein sequence ID" value="AAM23616.1"/>
    <property type="molecule type" value="Genomic_DNA"/>
</dbReference>
<dbReference type="SMR" id="Q8RCT6"/>
<dbReference type="STRING" id="273068.TTE0324"/>
<dbReference type="KEGG" id="tte:TTE0324"/>
<dbReference type="eggNOG" id="COG0495">
    <property type="taxonomic scope" value="Bacteria"/>
</dbReference>
<dbReference type="HOGENOM" id="CLU_004427_0_0_9"/>
<dbReference type="Proteomes" id="UP000000555">
    <property type="component" value="Chromosome"/>
</dbReference>
<dbReference type="GO" id="GO:0005829">
    <property type="term" value="C:cytosol"/>
    <property type="evidence" value="ECO:0007669"/>
    <property type="project" value="TreeGrafter"/>
</dbReference>
<dbReference type="GO" id="GO:0002161">
    <property type="term" value="F:aminoacyl-tRNA deacylase activity"/>
    <property type="evidence" value="ECO:0007669"/>
    <property type="project" value="InterPro"/>
</dbReference>
<dbReference type="GO" id="GO:0005524">
    <property type="term" value="F:ATP binding"/>
    <property type="evidence" value="ECO:0007669"/>
    <property type="project" value="UniProtKB-UniRule"/>
</dbReference>
<dbReference type="GO" id="GO:0004823">
    <property type="term" value="F:leucine-tRNA ligase activity"/>
    <property type="evidence" value="ECO:0007669"/>
    <property type="project" value="UniProtKB-UniRule"/>
</dbReference>
<dbReference type="GO" id="GO:0006429">
    <property type="term" value="P:leucyl-tRNA aminoacylation"/>
    <property type="evidence" value="ECO:0007669"/>
    <property type="project" value="UniProtKB-UniRule"/>
</dbReference>
<dbReference type="CDD" id="cd07958">
    <property type="entry name" value="Anticodon_Ia_Leu_BEm"/>
    <property type="match status" value="1"/>
</dbReference>
<dbReference type="CDD" id="cd00812">
    <property type="entry name" value="LeuRS_core"/>
    <property type="match status" value="1"/>
</dbReference>
<dbReference type="FunFam" id="3.10.20.590:FF:000001">
    <property type="entry name" value="Leucine--tRNA ligase"/>
    <property type="match status" value="1"/>
</dbReference>
<dbReference type="FunFam" id="3.40.50.620:FF:000003">
    <property type="entry name" value="Leucine--tRNA ligase"/>
    <property type="match status" value="1"/>
</dbReference>
<dbReference type="FunFam" id="3.40.50.620:FF:000056">
    <property type="entry name" value="Leucine--tRNA ligase"/>
    <property type="match status" value="1"/>
</dbReference>
<dbReference type="FunFam" id="1.10.730.10:FF:000011">
    <property type="entry name" value="Leucine--tRNA ligase chloroplastic/mitochondrial"/>
    <property type="match status" value="1"/>
</dbReference>
<dbReference type="Gene3D" id="3.10.20.590">
    <property type="match status" value="1"/>
</dbReference>
<dbReference type="Gene3D" id="3.40.50.620">
    <property type="entry name" value="HUPs"/>
    <property type="match status" value="2"/>
</dbReference>
<dbReference type="Gene3D" id="1.10.730.10">
    <property type="entry name" value="Isoleucyl-tRNA Synthetase, Domain 1"/>
    <property type="match status" value="1"/>
</dbReference>
<dbReference type="HAMAP" id="MF_00049_B">
    <property type="entry name" value="Leu_tRNA_synth_B"/>
    <property type="match status" value="1"/>
</dbReference>
<dbReference type="InterPro" id="IPR002300">
    <property type="entry name" value="aa-tRNA-synth_Ia"/>
</dbReference>
<dbReference type="InterPro" id="IPR002302">
    <property type="entry name" value="Leu-tRNA-ligase"/>
</dbReference>
<dbReference type="InterPro" id="IPR025709">
    <property type="entry name" value="Leu_tRNA-synth_edit"/>
</dbReference>
<dbReference type="InterPro" id="IPR013155">
    <property type="entry name" value="M/V/L/I-tRNA-synth_anticd-bd"/>
</dbReference>
<dbReference type="InterPro" id="IPR015413">
    <property type="entry name" value="Methionyl/Leucyl_tRNA_Synth"/>
</dbReference>
<dbReference type="InterPro" id="IPR014729">
    <property type="entry name" value="Rossmann-like_a/b/a_fold"/>
</dbReference>
<dbReference type="InterPro" id="IPR009080">
    <property type="entry name" value="tRNAsynth_Ia_anticodon-bd"/>
</dbReference>
<dbReference type="InterPro" id="IPR009008">
    <property type="entry name" value="Val/Leu/Ile-tRNA-synth_edit"/>
</dbReference>
<dbReference type="NCBIfam" id="TIGR00396">
    <property type="entry name" value="leuS_bact"/>
    <property type="match status" value="1"/>
</dbReference>
<dbReference type="PANTHER" id="PTHR43740:SF2">
    <property type="entry name" value="LEUCINE--TRNA LIGASE, MITOCHONDRIAL"/>
    <property type="match status" value="1"/>
</dbReference>
<dbReference type="PANTHER" id="PTHR43740">
    <property type="entry name" value="LEUCYL-TRNA SYNTHETASE"/>
    <property type="match status" value="1"/>
</dbReference>
<dbReference type="Pfam" id="PF08264">
    <property type="entry name" value="Anticodon_1"/>
    <property type="match status" value="1"/>
</dbReference>
<dbReference type="Pfam" id="PF00133">
    <property type="entry name" value="tRNA-synt_1"/>
    <property type="match status" value="1"/>
</dbReference>
<dbReference type="Pfam" id="PF13603">
    <property type="entry name" value="tRNA-synt_1_2"/>
    <property type="match status" value="1"/>
</dbReference>
<dbReference type="Pfam" id="PF09334">
    <property type="entry name" value="tRNA-synt_1g"/>
    <property type="match status" value="1"/>
</dbReference>
<dbReference type="PRINTS" id="PR00985">
    <property type="entry name" value="TRNASYNTHLEU"/>
</dbReference>
<dbReference type="SUPFAM" id="SSF47323">
    <property type="entry name" value="Anticodon-binding domain of a subclass of class I aminoacyl-tRNA synthetases"/>
    <property type="match status" value="1"/>
</dbReference>
<dbReference type="SUPFAM" id="SSF52374">
    <property type="entry name" value="Nucleotidylyl transferase"/>
    <property type="match status" value="1"/>
</dbReference>
<dbReference type="SUPFAM" id="SSF50677">
    <property type="entry name" value="ValRS/IleRS/LeuRS editing domain"/>
    <property type="match status" value="1"/>
</dbReference>
<comment type="catalytic activity">
    <reaction evidence="1">
        <text>tRNA(Leu) + L-leucine + ATP = L-leucyl-tRNA(Leu) + AMP + diphosphate</text>
        <dbReference type="Rhea" id="RHEA:11688"/>
        <dbReference type="Rhea" id="RHEA-COMP:9613"/>
        <dbReference type="Rhea" id="RHEA-COMP:9622"/>
        <dbReference type="ChEBI" id="CHEBI:30616"/>
        <dbReference type="ChEBI" id="CHEBI:33019"/>
        <dbReference type="ChEBI" id="CHEBI:57427"/>
        <dbReference type="ChEBI" id="CHEBI:78442"/>
        <dbReference type="ChEBI" id="CHEBI:78494"/>
        <dbReference type="ChEBI" id="CHEBI:456215"/>
        <dbReference type="EC" id="6.1.1.4"/>
    </reaction>
</comment>
<comment type="subcellular location">
    <subcellularLocation>
        <location evidence="1">Cytoplasm</location>
    </subcellularLocation>
</comment>
<comment type="similarity">
    <text evidence="1">Belongs to the class-I aminoacyl-tRNA synthetase family.</text>
</comment>
<proteinExistence type="inferred from homology"/>
<organism>
    <name type="scientific">Caldanaerobacter subterraneus subsp. tengcongensis (strain DSM 15242 / JCM 11007 / NBRC 100824 / MB4)</name>
    <name type="common">Thermoanaerobacter tengcongensis</name>
    <dbReference type="NCBI Taxonomy" id="273068"/>
    <lineage>
        <taxon>Bacteria</taxon>
        <taxon>Bacillati</taxon>
        <taxon>Bacillota</taxon>
        <taxon>Clostridia</taxon>
        <taxon>Thermoanaerobacterales</taxon>
        <taxon>Thermoanaerobacteraceae</taxon>
        <taxon>Caldanaerobacter</taxon>
    </lineage>
</organism>
<reference key="1">
    <citation type="journal article" date="2002" name="Genome Res.">
        <title>A complete sequence of the T. tengcongensis genome.</title>
        <authorList>
            <person name="Bao Q."/>
            <person name="Tian Y."/>
            <person name="Li W."/>
            <person name="Xu Z."/>
            <person name="Xuan Z."/>
            <person name="Hu S."/>
            <person name="Dong W."/>
            <person name="Yang J."/>
            <person name="Chen Y."/>
            <person name="Xue Y."/>
            <person name="Xu Y."/>
            <person name="Lai X."/>
            <person name="Huang L."/>
            <person name="Dong X."/>
            <person name="Ma Y."/>
            <person name="Ling L."/>
            <person name="Tan H."/>
            <person name="Chen R."/>
            <person name="Wang J."/>
            <person name="Yu J."/>
            <person name="Yang H."/>
        </authorList>
    </citation>
    <scope>NUCLEOTIDE SEQUENCE [LARGE SCALE GENOMIC DNA]</scope>
    <source>
        <strain>DSM 15242 / JCM 11007 / NBRC 100824 / MB4</strain>
    </source>
</reference>
<name>SYL_CALS4</name>
<evidence type="ECO:0000255" key="1">
    <source>
        <dbReference type="HAMAP-Rule" id="MF_00049"/>
    </source>
</evidence>
<accession>Q8RCT6</accession>
<protein>
    <recommendedName>
        <fullName evidence="1">Leucine--tRNA ligase</fullName>
        <ecNumber evidence="1">6.1.1.4</ecNumber>
    </recommendedName>
    <alternativeName>
        <fullName evidence="1">Leucyl-tRNA synthetase</fullName>
        <shortName evidence="1">LeuRS</shortName>
    </alternativeName>
</protein>